<accession>B4E5Y9</accession>
<gene>
    <name evidence="1" type="primary">engB</name>
    <name type="ordered locus">BceJ2315_02680</name>
    <name type="ORF">BCAL0265</name>
</gene>
<organism>
    <name type="scientific">Burkholderia cenocepacia (strain ATCC BAA-245 / DSM 16553 / LMG 16656 / NCTC 13227 / J2315 / CF5610)</name>
    <name type="common">Burkholderia cepacia (strain J2315)</name>
    <dbReference type="NCBI Taxonomy" id="216591"/>
    <lineage>
        <taxon>Bacteria</taxon>
        <taxon>Pseudomonadati</taxon>
        <taxon>Pseudomonadota</taxon>
        <taxon>Betaproteobacteria</taxon>
        <taxon>Burkholderiales</taxon>
        <taxon>Burkholderiaceae</taxon>
        <taxon>Burkholderia</taxon>
        <taxon>Burkholderia cepacia complex</taxon>
    </lineage>
</organism>
<reference key="1">
    <citation type="journal article" date="2009" name="J. Bacteriol.">
        <title>The genome of Burkholderia cenocepacia J2315, an epidemic pathogen of cystic fibrosis patients.</title>
        <authorList>
            <person name="Holden M.T."/>
            <person name="Seth-Smith H.M."/>
            <person name="Crossman L.C."/>
            <person name="Sebaihia M."/>
            <person name="Bentley S.D."/>
            <person name="Cerdeno-Tarraga A.M."/>
            <person name="Thomson N.R."/>
            <person name="Bason N."/>
            <person name="Quail M.A."/>
            <person name="Sharp S."/>
            <person name="Cherevach I."/>
            <person name="Churcher C."/>
            <person name="Goodhead I."/>
            <person name="Hauser H."/>
            <person name="Holroyd N."/>
            <person name="Mungall K."/>
            <person name="Scott P."/>
            <person name="Walker D."/>
            <person name="White B."/>
            <person name="Rose H."/>
            <person name="Iversen P."/>
            <person name="Mil-Homens D."/>
            <person name="Rocha E.P."/>
            <person name="Fialho A.M."/>
            <person name="Baldwin A."/>
            <person name="Dowson C."/>
            <person name="Barrell B.G."/>
            <person name="Govan J.R."/>
            <person name="Vandamme P."/>
            <person name="Hart C.A."/>
            <person name="Mahenthiralingam E."/>
            <person name="Parkhill J."/>
        </authorList>
    </citation>
    <scope>NUCLEOTIDE SEQUENCE [LARGE SCALE GENOMIC DNA]</scope>
    <source>
        <strain>ATCC BAA-245 / DSM 16553 / LMG 16656 / NCTC 13227 / J2315 / CF5610</strain>
    </source>
</reference>
<keyword id="KW-0131">Cell cycle</keyword>
<keyword id="KW-0132">Cell division</keyword>
<keyword id="KW-0342">GTP-binding</keyword>
<keyword id="KW-0460">Magnesium</keyword>
<keyword id="KW-0479">Metal-binding</keyword>
<keyword id="KW-0547">Nucleotide-binding</keyword>
<keyword id="KW-0717">Septation</keyword>
<protein>
    <recommendedName>
        <fullName evidence="1">Probable GTP-binding protein EngB</fullName>
    </recommendedName>
</protein>
<dbReference type="EMBL" id="AM747720">
    <property type="protein sequence ID" value="CAR50576.1"/>
    <property type="molecule type" value="Genomic_DNA"/>
</dbReference>
<dbReference type="SMR" id="B4E5Y9"/>
<dbReference type="KEGG" id="bcj:BCAL0265"/>
<dbReference type="eggNOG" id="COG0218">
    <property type="taxonomic scope" value="Bacteria"/>
</dbReference>
<dbReference type="HOGENOM" id="CLU_033732_1_1_4"/>
<dbReference type="BioCyc" id="BCEN216591:G1G1V-308-MONOMER"/>
<dbReference type="Proteomes" id="UP000001035">
    <property type="component" value="Chromosome 1"/>
</dbReference>
<dbReference type="GO" id="GO:0005829">
    <property type="term" value="C:cytosol"/>
    <property type="evidence" value="ECO:0007669"/>
    <property type="project" value="TreeGrafter"/>
</dbReference>
<dbReference type="GO" id="GO:0005525">
    <property type="term" value="F:GTP binding"/>
    <property type="evidence" value="ECO:0007669"/>
    <property type="project" value="UniProtKB-UniRule"/>
</dbReference>
<dbReference type="GO" id="GO:0046872">
    <property type="term" value="F:metal ion binding"/>
    <property type="evidence" value="ECO:0007669"/>
    <property type="project" value="UniProtKB-KW"/>
</dbReference>
<dbReference type="GO" id="GO:0000917">
    <property type="term" value="P:division septum assembly"/>
    <property type="evidence" value="ECO:0007669"/>
    <property type="project" value="UniProtKB-KW"/>
</dbReference>
<dbReference type="CDD" id="cd01876">
    <property type="entry name" value="YihA_EngB"/>
    <property type="match status" value="1"/>
</dbReference>
<dbReference type="FunFam" id="3.40.50.300:FF:000098">
    <property type="entry name" value="Probable GTP-binding protein EngB"/>
    <property type="match status" value="1"/>
</dbReference>
<dbReference type="Gene3D" id="3.40.50.300">
    <property type="entry name" value="P-loop containing nucleotide triphosphate hydrolases"/>
    <property type="match status" value="1"/>
</dbReference>
<dbReference type="HAMAP" id="MF_00321">
    <property type="entry name" value="GTPase_EngB"/>
    <property type="match status" value="1"/>
</dbReference>
<dbReference type="InterPro" id="IPR030393">
    <property type="entry name" value="G_ENGB_dom"/>
</dbReference>
<dbReference type="InterPro" id="IPR006073">
    <property type="entry name" value="GTP-bd"/>
</dbReference>
<dbReference type="InterPro" id="IPR019987">
    <property type="entry name" value="GTP-bd_ribosome_bio_YsxC"/>
</dbReference>
<dbReference type="InterPro" id="IPR027417">
    <property type="entry name" value="P-loop_NTPase"/>
</dbReference>
<dbReference type="NCBIfam" id="TIGR03598">
    <property type="entry name" value="GTPase_YsxC"/>
    <property type="match status" value="1"/>
</dbReference>
<dbReference type="PANTHER" id="PTHR11649:SF13">
    <property type="entry name" value="ENGB-TYPE G DOMAIN-CONTAINING PROTEIN"/>
    <property type="match status" value="1"/>
</dbReference>
<dbReference type="PANTHER" id="PTHR11649">
    <property type="entry name" value="MSS1/TRME-RELATED GTP-BINDING PROTEIN"/>
    <property type="match status" value="1"/>
</dbReference>
<dbReference type="Pfam" id="PF01926">
    <property type="entry name" value="MMR_HSR1"/>
    <property type="match status" value="1"/>
</dbReference>
<dbReference type="SUPFAM" id="SSF52540">
    <property type="entry name" value="P-loop containing nucleoside triphosphate hydrolases"/>
    <property type="match status" value="1"/>
</dbReference>
<dbReference type="PROSITE" id="PS51706">
    <property type="entry name" value="G_ENGB"/>
    <property type="match status" value="1"/>
</dbReference>
<sequence length="219" mass="24359">MAFLLHQARFYTTVNHLRDLPPTVQPEIAFAGRSNAGKSTAINVLCNQKRLAFASKTPGRTQHINYFSVGPAAEPVANLVDLPGYGYAEVPGAAKAHWEMLLSSYLATRSQLCGLILMMDSRRPLTDLDRRMIEWFAPTGKPIHTLLTKCDKLTRQESINALRNTQKGLDAYRDQGVKGKLTVQLFSALKRTGLDEAHELIESWLRPSVADEKSEPVAQ</sequence>
<comment type="function">
    <text evidence="1">Necessary for normal cell division and for the maintenance of normal septation.</text>
</comment>
<comment type="cofactor">
    <cofactor evidence="1">
        <name>Mg(2+)</name>
        <dbReference type="ChEBI" id="CHEBI:18420"/>
    </cofactor>
</comment>
<comment type="similarity">
    <text evidence="1">Belongs to the TRAFAC class TrmE-Era-EngA-EngB-Septin-like GTPase superfamily. EngB GTPase family.</text>
</comment>
<feature type="chain" id="PRO_1000115956" description="Probable GTP-binding protein EngB">
    <location>
        <begin position="1"/>
        <end position="219"/>
    </location>
</feature>
<feature type="domain" description="EngB-type G" evidence="1">
    <location>
        <begin position="24"/>
        <end position="207"/>
    </location>
</feature>
<feature type="binding site" evidence="1">
    <location>
        <begin position="32"/>
        <end position="39"/>
    </location>
    <ligand>
        <name>GTP</name>
        <dbReference type="ChEBI" id="CHEBI:37565"/>
    </ligand>
</feature>
<feature type="binding site" evidence="1">
    <location>
        <position position="39"/>
    </location>
    <ligand>
        <name>Mg(2+)</name>
        <dbReference type="ChEBI" id="CHEBI:18420"/>
    </ligand>
</feature>
<feature type="binding site" evidence="1">
    <location>
        <begin position="59"/>
        <end position="63"/>
    </location>
    <ligand>
        <name>GTP</name>
        <dbReference type="ChEBI" id="CHEBI:37565"/>
    </ligand>
</feature>
<feature type="binding site" evidence="1">
    <location>
        <position position="61"/>
    </location>
    <ligand>
        <name>Mg(2+)</name>
        <dbReference type="ChEBI" id="CHEBI:18420"/>
    </ligand>
</feature>
<feature type="binding site" evidence="1">
    <location>
        <begin position="81"/>
        <end position="84"/>
    </location>
    <ligand>
        <name>GTP</name>
        <dbReference type="ChEBI" id="CHEBI:37565"/>
    </ligand>
</feature>
<feature type="binding site" evidence="1">
    <location>
        <begin position="148"/>
        <end position="151"/>
    </location>
    <ligand>
        <name>GTP</name>
        <dbReference type="ChEBI" id="CHEBI:37565"/>
    </ligand>
</feature>
<feature type="binding site" evidence="1">
    <location>
        <begin position="186"/>
        <end position="188"/>
    </location>
    <ligand>
        <name>GTP</name>
        <dbReference type="ChEBI" id="CHEBI:37565"/>
    </ligand>
</feature>
<evidence type="ECO:0000255" key="1">
    <source>
        <dbReference type="HAMAP-Rule" id="MF_00321"/>
    </source>
</evidence>
<proteinExistence type="inferred from homology"/>
<name>ENGB_BURCJ</name>